<sequence>MSTQWWKESVVYQIYPRSFQDYNGDGIGDIPGIISRLDYLKTLGVDVIWLSPVYDSPNDDNGYDIRDYKAIMDEFGTMADWETLLAEIHTRGMKLIMDLVVNHSSDEHAWFVESRKSKDNPYRDFYIWRPGKDGKEPNNWASNFSGSAWTYDETTGEYYLHLFSKKQPDLNWENPKLREKIYEMMTWWLDKGIDGFRMDVINFISKVDGLPDAEPQPGQPYVSGSNYFMNGPNIHTYLQEMHENVLQHYDLMTVGEMPGVTLELAQLYTGEERNELNMVFQFEHVGLDQGPNGKWDLKPLELKDLKASLSRWQKGLQDIGWNSLYWNNHDQPRIVSRFGDDQSYRVESAKMLATLLHCMKGTPFIYQGEEIGMTNVRFDSIEQYQDIETLNMYKEKRAQGVPHETLMASIHAKGRDNARTPMQWDETKHGGFTDGTPWLEVNPNYKEINVKQALKDPNSIFYHYQKLIQLRKEHAILVHGSYDLILEDDPEIFAYKRTYNGQTLLVVCNFYGRITDFECPAEVVLSEPTLLLSNYDEEENGSYTSFRLRPYEARVYLGKNE</sequence>
<proteinExistence type="inferred from homology"/>
<accession>Q9K8U9</accession>
<organism>
    <name type="scientific">Halalkalibacterium halodurans (strain ATCC BAA-125 / DSM 18197 / FERM 7344 / JCM 9153 / C-125)</name>
    <name type="common">Bacillus halodurans</name>
    <dbReference type="NCBI Taxonomy" id="272558"/>
    <lineage>
        <taxon>Bacteria</taxon>
        <taxon>Bacillati</taxon>
        <taxon>Bacillota</taxon>
        <taxon>Bacilli</taxon>
        <taxon>Bacillales</taxon>
        <taxon>Bacillaceae</taxon>
        <taxon>Halalkalibacterium (ex Joshi et al. 2022)</taxon>
    </lineage>
</organism>
<reference key="1">
    <citation type="journal article" date="2000" name="Nucleic Acids Res.">
        <title>Complete genome sequence of the alkaliphilic bacterium Bacillus halodurans and genomic sequence comparison with Bacillus subtilis.</title>
        <authorList>
            <person name="Takami H."/>
            <person name="Nakasone K."/>
            <person name="Takaki Y."/>
            <person name="Maeno G."/>
            <person name="Sasaki R."/>
            <person name="Masui N."/>
            <person name="Fuji F."/>
            <person name="Hirama C."/>
            <person name="Nakamura Y."/>
            <person name="Ogasawara N."/>
            <person name="Kuhara S."/>
            <person name="Horikoshi K."/>
        </authorList>
    </citation>
    <scope>NUCLEOTIDE SEQUENCE [LARGE SCALE GENOMIC DNA]</scope>
    <source>
        <strain>ATCC BAA-125 / DSM 18197 / FERM 7344 / JCM 9153 / C-125</strain>
    </source>
</reference>
<gene>
    <name type="primary">malL</name>
    <name type="ordered locus">BH2903</name>
</gene>
<dbReference type="EC" id="3.2.1.10"/>
<dbReference type="EMBL" id="BA000004">
    <property type="protein sequence ID" value="BAB06622.1"/>
    <property type="molecule type" value="Genomic_DNA"/>
</dbReference>
<dbReference type="PIR" id="G84012">
    <property type="entry name" value="G84012"/>
</dbReference>
<dbReference type="RefSeq" id="WP_010899050.1">
    <property type="nucleotide sequence ID" value="NC_002570.2"/>
</dbReference>
<dbReference type="SMR" id="Q9K8U9"/>
<dbReference type="STRING" id="272558.gene:10728813"/>
<dbReference type="CAZy" id="GH13">
    <property type="family name" value="Glycoside Hydrolase Family 13"/>
</dbReference>
<dbReference type="KEGG" id="bha:BH2903"/>
<dbReference type="eggNOG" id="COG0366">
    <property type="taxonomic scope" value="Bacteria"/>
</dbReference>
<dbReference type="HOGENOM" id="CLU_006462_1_2_9"/>
<dbReference type="OrthoDB" id="9805159at2"/>
<dbReference type="Proteomes" id="UP000001258">
    <property type="component" value="Chromosome"/>
</dbReference>
<dbReference type="GO" id="GO:0005737">
    <property type="term" value="C:cytoplasm"/>
    <property type="evidence" value="ECO:0007669"/>
    <property type="project" value="UniProtKB-SubCell"/>
</dbReference>
<dbReference type="GO" id="GO:0004556">
    <property type="term" value="F:alpha-amylase activity"/>
    <property type="evidence" value="ECO:0007669"/>
    <property type="project" value="TreeGrafter"/>
</dbReference>
<dbReference type="GO" id="GO:0004574">
    <property type="term" value="F:oligo-1,6-glucosidase activity"/>
    <property type="evidence" value="ECO:0007669"/>
    <property type="project" value="UniProtKB-EC"/>
</dbReference>
<dbReference type="GO" id="GO:0009313">
    <property type="term" value="P:oligosaccharide catabolic process"/>
    <property type="evidence" value="ECO:0007669"/>
    <property type="project" value="TreeGrafter"/>
</dbReference>
<dbReference type="CDD" id="cd11333">
    <property type="entry name" value="AmyAc_SI_OligoGlu_DGase"/>
    <property type="match status" value="1"/>
</dbReference>
<dbReference type="FunFam" id="3.20.20.80:FF:000014">
    <property type="entry name" value="Alpha,alpha-phosphotrehalase"/>
    <property type="match status" value="1"/>
</dbReference>
<dbReference type="FunFam" id="3.20.20.80:FF:000064">
    <property type="entry name" value="Oligo-1,6-glucosidase"/>
    <property type="match status" value="1"/>
</dbReference>
<dbReference type="FunFam" id="2.60.40.1180:FF:000007">
    <property type="entry name" value="Sucrose isomerase"/>
    <property type="match status" value="1"/>
</dbReference>
<dbReference type="FunFam" id="3.90.400.10:FF:000002">
    <property type="entry name" value="Sucrose isomerase"/>
    <property type="match status" value="1"/>
</dbReference>
<dbReference type="Gene3D" id="3.20.20.80">
    <property type="entry name" value="Glycosidases"/>
    <property type="match status" value="1"/>
</dbReference>
<dbReference type="Gene3D" id="2.60.40.1180">
    <property type="entry name" value="Golgi alpha-mannosidase II"/>
    <property type="match status" value="1"/>
</dbReference>
<dbReference type="Gene3D" id="3.90.400.10">
    <property type="entry name" value="Oligo-1,6-glucosidase, Domain 2"/>
    <property type="match status" value="1"/>
</dbReference>
<dbReference type="InterPro" id="IPR006047">
    <property type="entry name" value="Glyco_hydro_13_cat_dom"/>
</dbReference>
<dbReference type="InterPro" id="IPR013780">
    <property type="entry name" value="Glyco_hydro_b"/>
</dbReference>
<dbReference type="InterPro" id="IPR017853">
    <property type="entry name" value="Glycoside_hydrolase_SF"/>
</dbReference>
<dbReference type="InterPro" id="IPR032091">
    <property type="entry name" value="Malt_amylase-like_C"/>
</dbReference>
<dbReference type="InterPro" id="IPR045857">
    <property type="entry name" value="O16G_dom_2"/>
</dbReference>
<dbReference type="NCBIfam" id="NF008183">
    <property type="entry name" value="PRK10933.1"/>
    <property type="match status" value="1"/>
</dbReference>
<dbReference type="PANTHER" id="PTHR10357">
    <property type="entry name" value="ALPHA-AMYLASE FAMILY MEMBER"/>
    <property type="match status" value="1"/>
</dbReference>
<dbReference type="PANTHER" id="PTHR10357:SF184">
    <property type="entry name" value="OLIGO-1,6-GLUCOSIDASE 1"/>
    <property type="match status" value="1"/>
</dbReference>
<dbReference type="Pfam" id="PF00128">
    <property type="entry name" value="Alpha-amylase"/>
    <property type="match status" value="1"/>
</dbReference>
<dbReference type="Pfam" id="PF16657">
    <property type="entry name" value="Malt_amylase_C"/>
    <property type="match status" value="1"/>
</dbReference>
<dbReference type="SMART" id="SM00642">
    <property type="entry name" value="Aamy"/>
    <property type="match status" value="1"/>
</dbReference>
<dbReference type="SUPFAM" id="SSF51445">
    <property type="entry name" value="(Trans)glycosidases"/>
    <property type="match status" value="1"/>
</dbReference>
<dbReference type="SUPFAM" id="SSF51011">
    <property type="entry name" value="Glycosyl hydrolase domain"/>
    <property type="match status" value="1"/>
</dbReference>
<comment type="catalytic activity">
    <reaction>
        <text>Hydrolysis of (1-&gt;6)-alpha-D-glucosidic linkages in some oligosaccharides produced from starch and glycogen by alpha-amylase, and in isomaltose.</text>
        <dbReference type="EC" id="3.2.1.10"/>
    </reaction>
</comment>
<comment type="subcellular location">
    <subcellularLocation>
        <location>Cytoplasm</location>
    </subcellularLocation>
</comment>
<comment type="similarity">
    <text evidence="2">Belongs to the glycosyl hydrolase 13 family.</text>
</comment>
<evidence type="ECO:0000250" key="1"/>
<evidence type="ECO:0000305" key="2"/>
<name>O16G_HALH5</name>
<protein>
    <recommendedName>
        <fullName>Oligo-1,6-glucosidase</fullName>
        <ecNumber>3.2.1.10</ecNumber>
    </recommendedName>
    <alternativeName>
        <fullName>Dextrin 6-alpha-D-glucanohydrolase</fullName>
    </alternativeName>
    <alternativeName>
        <fullName>Oligosaccharide alpha-1,6-glucosidase</fullName>
    </alternativeName>
    <alternativeName>
        <fullName>Sucrase-isomaltase</fullName>
        <shortName>Isomaltase</shortName>
    </alternativeName>
</protein>
<feature type="chain" id="PRO_0000054315" description="Oligo-1,6-glucosidase">
    <location>
        <begin position="1"/>
        <end position="561"/>
    </location>
</feature>
<feature type="active site" description="Nucleophile" evidence="1">
    <location>
        <position position="199"/>
    </location>
</feature>
<feature type="active site" description="Proton donor" evidence="1">
    <location>
        <position position="256"/>
    </location>
</feature>
<feature type="site" description="Transition state stabilizer" evidence="1">
    <location>
        <position position="330"/>
    </location>
</feature>
<keyword id="KW-0963">Cytoplasm</keyword>
<keyword id="KW-0326">Glycosidase</keyword>
<keyword id="KW-0378">Hydrolase</keyword>
<keyword id="KW-1185">Reference proteome</keyword>